<reference key="1">
    <citation type="submission" date="2005-10" db="EMBL/GenBank/DDBJ databases">
        <title>Complete sequence of chromosome 1 of Burkholderia sp. 383.</title>
        <authorList>
            <consortium name="US DOE Joint Genome Institute"/>
            <person name="Copeland A."/>
            <person name="Lucas S."/>
            <person name="Lapidus A."/>
            <person name="Barry K."/>
            <person name="Detter J.C."/>
            <person name="Glavina T."/>
            <person name="Hammon N."/>
            <person name="Israni S."/>
            <person name="Pitluck S."/>
            <person name="Chain P."/>
            <person name="Malfatti S."/>
            <person name="Shin M."/>
            <person name="Vergez L."/>
            <person name="Schmutz J."/>
            <person name="Larimer F."/>
            <person name="Land M."/>
            <person name="Kyrpides N."/>
            <person name="Lykidis A."/>
            <person name="Richardson P."/>
        </authorList>
    </citation>
    <scope>NUCLEOTIDE SEQUENCE [LARGE SCALE GENOMIC DNA]</scope>
    <source>
        <strain>ATCC 17760 / DSM 23089 / LMG 22485 / NCIMB 9086 / R18194 / 383</strain>
    </source>
</reference>
<sequence>MNLNATLFAQMVVFLVLAWFTMKFVWPPLINALDERSKKIADGLAAAEKGKAELDAAHKRVDQELAQARNDGQQRIADAEKRAQAVAEEIKSNAQAEAARIIAQAKAEAEQQIVKAREALRGEVATLAVKGAEQILKREVDQTAHAQLLNQLKAEL</sequence>
<organism>
    <name type="scientific">Burkholderia lata (strain ATCC 17760 / DSM 23089 / LMG 22485 / NCIMB 9086 / R18194 / 383)</name>
    <dbReference type="NCBI Taxonomy" id="482957"/>
    <lineage>
        <taxon>Bacteria</taxon>
        <taxon>Pseudomonadati</taxon>
        <taxon>Pseudomonadota</taxon>
        <taxon>Betaproteobacteria</taxon>
        <taxon>Burkholderiales</taxon>
        <taxon>Burkholderiaceae</taxon>
        <taxon>Burkholderia</taxon>
        <taxon>Burkholderia cepacia complex</taxon>
    </lineage>
</organism>
<dbReference type="EMBL" id="CP000151">
    <property type="protein sequence ID" value="ABB06886.1"/>
    <property type="molecule type" value="Genomic_DNA"/>
</dbReference>
<dbReference type="RefSeq" id="WP_011350523.1">
    <property type="nucleotide sequence ID" value="NZ_WNDV01000030.1"/>
</dbReference>
<dbReference type="SMR" id="Q39KY0"/>
<dbReference type="KEGG" id="bur:Bcep18194_A3284"/>
<dbReference type="PATRIC" id="fig|482957.22.peg.114"/>
<dbReference type="HOGENOM" id="CLU_079215_4_5_4"/>
<dbReference type="Proteomes" id="UP000002705">
    <property type="component" value="Chromosome 1"/>
</dbReference>
<dbReference type="GO" id="GO:0005886">
    <property type="term" value="C:plasma membrane"/>
    <property type="evidence" value="ECO:0007669"/>
    <property type="project" value="UniProtKB-SubCell"/>
</dbReference>
<dbReference type="GO" id="GO:0045259">
    <property type="term" value="C:proton-transporting ATP synthase complex"/>
    <property type="evidence" value="ECO:0007669"/>
    <property type="project" value="UniProtKB-KW"/>
</dbReference>
<dbReference type="GO" id="GO:0046933">
    <property type="term" value="F:proton-transporting ATP synthase activity, rotational mechanism"/>
    <property type="evidence" value="ECO:0007669"/>
    <property type="project" value="UniProtKB-UniRule"/>
</dbReference>
<dbReference type="GO" id="GO:0046961">
    <property type="term" value="F:proton-transporting ATPase activity, rotational mechanism"/>
    <property type="evidence" value="ECO:0007669"/>
    <property type="project" value="TreeGrafter"/>
</dbReference>
<dbReference type="CDD" id="cd06503">
    <property type="entry name" value="ATP-synt_Fo_b"/>
    <property type="match status" value="1"/>
</dbReference>
<dbReference type="Gene3D" id="6.10.250.1580">
    <property type="match status" value="1"/>
</dbReference>
<dbReference type="HAMAP" id="MF_01398">
    <property type="entry name" value="ATP_synth_b_bprime"/>
    <property type="match status" value="1"/>
</dbReference>
<dbReference type="InterPro" id="IPR028987">
    <property type="entry name" value="ATP_synth_B-like_membr_sf"/>
</dbReference>
<dbReference type="InterPro" id="IPR002146">
    <property type="entry name" value="ATP_synth_b/b'su_bac/chlpt"/>
</dbReference>
<dbReference type="InterPro" id="IPR005864">
    <property type="entry name" value="ATP_synth_F0_bsu_bac"/>
</dbReference>
<dbReference type="InterPro" id="IPR050059">
    <property type="entry name" value="ATP_synthase_B_chain"/>
</dbReference>
<dbReference type="NCBIfam" id="TIGR01144">
    <property type="entry name" value="ATP_synt_b"/>
    <property type="match status" value="1"/>
</dbReference>
<dbReference type="NCBIfam" id="NF004411">
    <property type="entry name" value="PRK05759.1-2"/>
    <property type="match status" value="1"/>
</dbReference>
<dbReference type="PANTHER" id="PTHR33445:SF1">
    <property type="entry name" value="ATP SYNTHASE SUBUNIT B"/>
    <property type="match status" value="1"/>
</dbReference>
<dbReference type="PANTHER" id="PTHR33445">
    <property type="entry name" value="ATP SYNTHASE SUBUNIT B', CHLOROPLASTIC"/>
    <property type="match status" value="1"/>
</dbReference>
<dbReference type="Pfam" id="PF00430">
    <property type="entry name" value="ATP-synt_B"/>
    <property type="match status" value="1"/>
</dbReference>
<dbReference type="SUPFAM" id="SSF81573">
    <property type="entry name" value="F1F0 ATP synthase subunit B, membrane domain"/>
    <property type="match status" value="1"/>
</dbReference>
<gene>
    <name evidence="1" type="primary">atpF</name>
    <name type="ordered locus">Bcep18194_A3284</name>
</gene>
<accession>Q39KY0</accession>
<evidence type="ECO:0000255" key="1">
    <source>
        <dbReference type="HAMAP-Rule" id="MF_01398"/>
    </source>
</evidence>
<keyword id="KW-0066">ATP synthesis</keyword>
<keyword id="KW-0997">Cell inner membrane</keyword>
<keyword id="KW-1003">Cell membrane</keyword>
<keyword id="KW-0138">CF(0)</keyword>
<keyword id="KW-0375">Hydrogen ion transport</keyword>
<keyword id="KW-0406">Ion transport</keyword>
<keyword id="KW-0472">Membrane</keyword>
<keyword id="KW-0812">Transmembrane</keyword>
<keyword id="KW-1133">Transmembrane helix</keyword>
<keyword id="KW-0813">Transport</keyword>
<feature type="chain" id="PRO_0000368395" description="ATP synthase subunit b">
    <location>
        <begin position="1"/>
        <end position="156"/>
    </location>
</feature>
<feature type="transmembrane region" description="Helical" evidence="1">
    <location>
        <begin position="7"/>
        <end position="29"/>
    </location>
</feature>
<comment type="function">
    <text evidence="1">F(1)F(0) ATP synthase produces ATP from ADP in the presence of a proton or sodium gradient. F-type ATPases consist of two structural domains, F(1) containing the extramembraneous catalytic core and F(0) containing the membrane proton channel, linked together by a central stalk and a peripheral stalk. During catalysis, ATP synthesis in the catalytic domain of F(1) is coupled via a rotary mechanism of the central stalk subunits to proton translocation.</text>
</comment>
<comment type="function">
    <text evidence="1">Component of the F(0) channel, it forms part of the peripheral stalk, linking F(1) to F(0).</text>
</comment>
<comment type="subunit">
    <text evidence="1">F-type ATPases have 2 components, F(1) - the catalytic core - and F(0) - the membrane proton channel. F(1) has five subunits: alpha(3), beta(3), gamma(1), delta(1), epsilon(1). F(0) has three main subunits: a(1), b(2) and c(10-14). The alpha and beta chains form an alternating ring which encloses part of the gamma chain. F(1) is attached to F(0) by a central stalk formed by the gamma and epsilon chains, while a peripheral stalk is formed by the delta and b chains.</text>
</comment>
<comment type="subcellular location">
    <subcellularLocation>
        <location evidence="1">Cell inner membrane</location>
        <topology evidence="1">Single-pass membrane protein</topology>
    </subcellularLocation>
</comment>
<comment type="similarity">
    <text evidence="1">Belongs to the ATPase B chain family.</text>
</comment>
<name>ATPF_BURL3</name>
<protein>
    <recommendedName>
        <fullName evidence="1">ATP synthase subunit b</fullName>
    </recommendedName>
    <alternativeName>
        <fullName evidence="1">ATP synthase F(0) sector subunit b</fullName>
    </alternativeName>
    <alternativeName>
        <fullName evidence="1">ATPase subunit I</fullName>
    </alternativeName>
    <alternativeName>
        <fullName evidence="1">F-type ATPase subunit b</fullName>
        <shortName evidence="1">F-ATPase subunit b</shortName>
    </alternativeName>
</protein>
<proteinExistence type="inferred from homology"/>